<sequence length="149" mass="17303">MASSDIQVKELEKRASGQAFELILSPRSKESVPEFPLSPPKKKDLSLEEIQKKLEAAEERRKSHEAEVLKQLAEKREHEKEVLQKAIEENNNFSKMAEEKLTHKMEANKENREAQMAAKLERLREKDKHIEEVRKNKESKDPADETEAD</sequence>
<evidence type="ECO:0000250" key="1"/>
<evidence type="ECO:0000250" key="2">
    <source>
        <dbReference type="UniProtKB" id="P16949"/>
    </source>
</evidence>
<evidence type="ECO:0000250" key="3">
    <source>
        <dbReference type="UniProtKB" id="P54227"/>
    </source>
</evidence>
<evidence type="ECO:0000255" key="4"/>
<evidence type="ECO:0000255" key="5">
    <source>
        <dbReference type="PROSITE-ProRule" id="PRU00998"/>
    </source>
</evidence>
<evidence type="ECO:0000256" key="6">
    <source>
        <dbReference type="SAM" id="MobiDB-lite"/>
    </source>
</evidence>
<evidence type="ECO:0000305" key="7"/>
<dbReference type="EMBL" id="AY644720">
    <property type="protein sequence ID" value="AAT66936.1"/>
    <property type="molecule type" value="mRNA"/>
</dbReference>
<dbReference type="RefSeq" id="NP_001009582.1">
    <property type="nucleotide sequence ID" value="NM_001009582.1"/>
</dbReference>
<dbReference type="RefSeq" id="XP_005665169.1">
    <property type="nucleotide sequence ID" value="XM_005665112.3"/>
</dbReference>
<dbReference type="RefSeq" id="XP_005665170.1">
    <property type="nucleotide sequence ID" value="XM_005665113.2"/>
</dbReference>
<dbReference type="RefSeq" id="XP_005665171.1">
    <property type="nucleotide sequence ID" value="XM_005665114.3"/>
</dbReference>
<dbReference type="RefSeq" id="XP_013854514.1">
    <property type="nucleotide sequence ID" value="XM_013999060.1"/>
</dbReference>
<dbReference type="SMR" id="Q6DUB7"/>
<dbReference type="FunCoup" id="Q6DUB7">
    <property type="interactions" value="967"/>
</dbReference>
<dbReference type="IntAct" id="Q6DUB7">
    <property type="interactions" value="1"/>
</dbReference>
<dbReference type="STRING" id="9823.ENSSSCP00000044880"/>
<dbReference type="PaxDb" id="9823-ENSSSCP00000021642"/>
<dbReference type="PeptideAtlas" id="Q6DUB7"/>
<dbReference type="Ensembl" id="ENSSSCT00000025212.4">
    <property type="protein sequence ID" value="ENSSSCP00000021642.1"/>
    <property type="gene ID" value="ENSSSCG00000026257.4"/>
</dbReference>
<dbReference type="Ensembl" id="ENSSSCT00015080060.1">
    <property type="protein sequence ID" value="ENSSSCP00015032362.1"/>
    <property type="gene ID" value="ENSSSCG00015059883.1"/>
</dbReference>
<dbReference type="Ensembl" id="ENSSSCT00055036570.1">
    <property type="protein sequence ID" value="ENSSSCP00055029056.1"/>
    <property type="gene ID" value="ENSSSCG00055018660.1"/>
</dbReference>
<dbReference type="Ensembl" id="ENSSSCT00055036609.1">
    <property type="protein sequence ID" value="ENSSSCP00055029090.1"/>
    <property type="gene ID" value="ENSSSCG00055018660.1"/>
</dbReference>
<dbReference type="Ensembl" id="ENSSSCT00055036685.1">
    <property type="protein sequence ID" value="ENSSSCP00055029156.1"/>
    <property type="gene ID" value="ENSSSCG00055018660.1"/>
</dbReference>
<dbReference type="Ensembl" id="ENSSSCT00055036743.1">
    <property type="protein sequence ID" value="ENSSSCP00055029205.1"/>
    <property type="gene ID" value="ENSSSCG00055018660.1"/>
</dbReference>
<dbReference type="Ensembl" id="ENSSSCT00070052631.1">
    <property type="protein sequence ID" value="ENSSSCP00070044560.1"/>
    <property type="gene ID" value="ENSSSCG00070026240.1"/>
</dbReference>
<dbReference type="Ensembl" id="ENSSSCT00070052665.1">
    <property type="protein sequence ID" value="ENSSSCP00070044591.1"/>
    <property type="gene ID" value="ENSSSCG00070026240.1"/>
</dbReference>
<dbReference type="Ensembl" id="ENSSSCT00070052667.1">
    <property type="protein sequence ID" value="ENSSSCP00070044592.1"/>
    <property type="gene ID" value="ENSSSCG00070026240.1"/>
</dbReference>
<dbReference type="Ensembl" id="ENSSSCT00105054523">
    <property type="protein sequence ID" value="ENSSSCP00105038337"/>
    <property type="gene ID" value="ENSSSCG00105028683"/>
</dbReference>
<dbReference type="Ensembl" id="ENSSSCT00110014695">
    <property type="protein sequence ID" value="ENSSSCP00110010208"/>
    <property type="gene ID" value="ENSSSCG00110007535"/>
</dbReference>
<dbReference type="Ensembl" id="ENSSSCT00115034072">
    <property type="protein sequence ID" value="ENSSSCP00115032346"/>
    <property type="gene ID" value="ENSSSCG00115019245"/>
</dbReference>
<dbReference type="Ensembl" id="ENSSSCT00130059674">
    <property type="protein sequence ID" value="ENSSSCP00130042777"/>
    <property type="gene ID" value="ENSSSCG00130030560"/>
</dbReference>
<dbReference type="GeneID" id="494463"/>
<dbReference type="KEGG" id="ssc:494463"/>
<dbReference type="CTD" id="3925"/>
<dbReference type="VGNC" id="VGNC:93560">
    <property type="gene designation" value="STMN1"/>
</dbReference>
<dbReference type="eggNOG" id="KOG1280">
    <property type="taxonomic scope" value="Eukaryota"/>
</dbReference>
<dbReference type="GeneTree" id="ENSGT01030000234597"/>
<dbReference type="HOGENOM" id="CLU_102026_1_1_1"/>
<dbReference type="InParanoid" id="Q6DUB7"/>
<dbReference type="OMA" id="RKSHEAM"/>
<dbReference type="OrthoDB" id="5986631at2759"/>
<dbReference type="TreeFam" id="TF326935"/>
<dbReference type="Proteomes" id="UP000008227">
    <property type="component" value="Chromosome 6"/>
</dbReference>
<dbReference type="Proteomes" id="UP000314985">
    <property type="component" value="Chromosome 6"/>
</dbReference>
<dbReference type="Proteomes" id="UP000694570">
    <property type="component" value="Unplaced"/>
</dbReference>
<dbReference type="Proteomes" id="UP000694571">
    <property type="component" value="Unplaced"/>
</dbReference>
<dbReference type="Proteomes" id="UP000694720">
    <property type="component" value="Unplaced"/>
</dbReference>
<dbReference type="Proteomes" id="UP000694722">
    <property type="component" value="Unplaced"/>
</dbReference>
<dbReference type="Proteomes" id="UP000694723">
    <property type="component" value="Unplaced"/>
</dbReference>
<dbReference type="Proteomes" id="UP000694724">
    <property type="component" value="Unplaced"/>
</dbReference>
<dbReference type="Proteomes" id="UP000694725">
    <property type="component" value="Unplaced"/>
</dbReference>
<dbReference type="Proteomes" id="UP000694726">
    <property type="component" value="Unplaced"/>
</dbReference>
<dbReference type="Proteomes" id="UP000694727">
    <property type="component" value="Unplaced"/>
</dbReference>
<dbReference type="Proteomes" id="UP000694728">
    <property type="component" value="Unplaced"/>
</dbReference>
<dbReference type="Bgee" id="ENSSSCG00000026257">
    <property type="expression patterns" value="Expressed in hypothalamus and 45 other cell types or tissues"/>
</dbReference>
<dbReference type="ExpressionAtlas" id="Q6DUB7">
    <property type="expression patterns" value="baseline and differential"/>
</dbReference>
<dbReference type="GO" id="GO:0005737">
    <property type="term" value="C:cytoplasm"/>
    <property type="evidence" value="ECO:0000318"/>
    <property type="project" value="GO_Central"/>
</dbReference>
<dbReference type="GO" id="GO:0005874">
    <property type="term" value="C:microtubule"/>
    <property type="evidence" value="ECO:0007669"/>
    <property type="project" value="UniProtKB-KW"/>
</dbReference>
<dbReference type="GO" id="GO:0043005">
    <property type="term" value="C:neuron projection"/>
    <property type="evidence" value="ECO:0000318"/>
    <property type="project" value="GO_Central"/>
</dbReference>
<dbReference type="GO" id="GO:0015631">
    <property type="term" value="F:tubulin binding"/>
    <property type="evidence" value="ECO:0000318"/>
    <property type="project" value="GO_Central"/>
</dbReference>
<dbReference type="GO" id="GO:0007019">
    <property type="term" value="P:microtubule depolymerization"/>
    <property type="evidence" value="ECO:0000318"/>
    <property type="project" value="GO_Central"/>
</dbReference>
<dbReference type="GO" id="GO:0031175">
    <property type="term" value="P:neuron projection development"/>
    <property type="evidence" value="ECO:0000318"/>
    <property type="project" value="GO_Central"/>
</dbReference>
<dbReference type="GO" id="GO:0031110">
    <property type="term" value="P:regulation of microtubule polymerization or depolymerization"/>
    <property type="evidence" value="ECO:0000318"/>
    <property type="project" value="GO_Central"/>
</dbReference>
<dbReference type="Gene3D" id="6.10.280.30">
    <property type="match status" value="1"/>
</dbReference>
<dbReference type="InterPro" id="IPR030514">
    <property type="entry name" value="Stathmin_CS"/>
</dbReference>
<dbReference type="InterPro" id="IPR000956">
    <property type="entry name" value="Stathmin_fam"/>
</dbReference>
<dbReference type="InterPro" id="IPR036002">
    <property type="entry name" value="Stathmin_sf"/>
</dbReference>
<dbReference type="PANTHER" id="PTHR10104">
    <property type="entry name" value="STATHMIN"/>
    <property type="match status" value="1"/>
</dbReference>
<dbReference type="PANTHER" id="PTHR10104:SF5">
    <property type="entry name" value="STATHMIN"/>
    <property type="match status" value="1"/>
</dbReference>
<dbReference type="Pfam" id="PF00836">
    <property type="entry name" value="Stathmin"/>
    <property type="match status" value="1"/>
</dbReference>
<dbReference type="PIRSF" id="PIRSF002285">
    <property type="entry name" value="Stathmin"/>
    <property type="match status" value="1"/>
</dbReference>
<dbReference type="PRINTS" id="PR00345">
    <property type="entry name" value="STATHMIN"/>
</dbReference>
<dbReference type="SUPFAM" id="SSF101494">
    <property type="entry name" value="Stathmin"/>
    <property type="match status" value="1"/>
</dbReference>
<dbReference type="PROSITE" id="PS00563">
    <property type="entry name" value="STATHMIN_1"/>
    <property type="match status" value="1"/>
</dbReference>
<dbReference type="PROSITE" id="PS01041">
    <property type="entry name" value="STATHMIN_2"/>
    <property type="match status" value="1"/>
</dbReference>
<dbReference type="PROSITE" id="PS51663">
    <property type="entry name" value="STATHMIN_3"/>
    <property type="match status" value="1"/>
</dbReference>
<gene>
    <name type="primary">STMN1</name>
</gene>
<feature type="initiator methionine" description="Removed" evidence="2">
    <location>
        <position position="1"/>
    </location>
</feature>
<feature type="chain" id="PRO_0000182391" description="Stathmin">
    <location>
        <begin position="2"/>
        <end position="149"/>
    </location>
</feature>
<feature type="domain" description="SLD" evidence="5">
    <location>
        <begin position="4"/>
        <end position="145"/>
    </location>
</feature>
<feature type="region of interest" description="Disordered" evidence="6">
    <location>
        <begin position="121"/>
        <end position="149"/>
    </location>
</feature>
<feature type="coiled-coil region" evidence="4">
    <location>
        <begin position="41"/>
        <end position="140"/>
    </location>
</feature>
<feature type="compositionally biased region" description="Basic and acidic residues" evidence="6">
    <location>
        <begin position="121"/>
        <end position="143"/>
    </location>
</feature>
<feature type="modified residue" description="N-acetylalanine" evidence="2">
    <location>
        <position position="2"/>
    </location>
</feature>
<feature type="modified residue" description="Phosphoserine" evidence="2">
    <location>
        <position position="4"/>
    </location>
</feature>
<feature type="modified residue" description="N6-acetyllysine" evidence="2">
    <location>
        <position position="9"/>
    </location>
</feature>
<feature type="modified residue" description="Phosphoserine; by PKA" evidence="3">
    <location>
        <position position="16"/>
    </location>
</feature>
<feature type="modified residue" description="Phosphoserine; by CDK1, MAPK1 and MAPK3" evidence="2">
    <location>
        <position position="25"/>
    </location>
</feature>
<feature type="modified residue" description="N6-methyllysine" evidence="2">
    <location>
        <position position="29"/>
    </location>
</feature>
<feature type="modified residue" description="Phosphoserine" evidence="2">
    <location>
        <position position="31"/>
    </location>
</feature>
<feature type="modified residue" description="Phosphoserine; by CDK1, MAPK1 and MAPK3" evidence="2">
    <location>
        <position position="38"/>
    </location>
</feature>
<feature type="modified residue" description="Phosphoserine; by PKA" evidence="2">
    <location>
        <position position="63"/>
    </location>
</feature>
<feature type="modified residue" description="N6-acetyllysine" evidence="2">
    <location>
        <position position="100"/>
    </location>
</feature>
<feature type="modified residue" description="N6-acetyllysine" evidence="2">
    <location>
        <position position="119"/>
    </location>
</feature>
<name>STMN1_PIG</name>
<protein>
    <recommendedName>
        <fullName>Stathmin</fullName>
    </recommendedName>
</protein>
<keyword id="KW-0007">Acetylation</keyword>
<keyword id="KW-0175">Coiled coil</keyword>
<keyword id="KW-0963">Cytoplasm</keyword>
<keyword id="KW-0206">Cytoskeleton</keyword>
<keyword id="KW-0217">Developmental protein</keyword>
<keyword id="KW-0221">Differentiation</keyword>
<keyword id="KW-0488">Methylation</keyword>
<keyword id="KW-0493">Microtubule</keyword>
<keyword id="KW-0524">Neurogenesis</keyword>
<keyword id="KW-0597">Phosphoprotein</keyword>
<keyword id="KW-1185">Reference proteome</keyword>
<accession>Q6DUB7</accession>
<comment type="function">
    <text evidence="1">Involved in the regulation of the microtubule (MT) filament system by destabilizing microtubules. Prevents assembly and promotes disassembly of microtubules (By similarity). Its phosphorylation at Ser-16 may be required for axon formation during neurogenesis. Involved in the control of the learned and innate fear (By similarity).</text>
</comment>
<comment type="subunit">
    <text evidence="1">Binds to two alpha/beta-tubulin heterodimers. Interacts with KIST (By similarity).</text>
</comment>
<comment type="subcellular location">
    <subcellularLocation>
        <location evidence="1">Cytoplasm</location>
        <location evidence="1">Cytoskeleton</location>
    </subcellularLocation>
</comment>
<comment type="PTM">
    <text evidence="1">Many different phosphorylated forms are observed depending on specific combinations among the sites which can be phosphorylated. MAPK is responsible for the phosphorylation of stathmin in response to NGF. Phosphorylation at Ser-16 seems to be required for neuron polarization (By similarity).</text>
</comment>
<comment type="similarity">
    <text evidence="7">Belongs to the stathmin family.</text>
</comment>
<proteinExistence type="evidence at transcript level"/>
<reference key="1">
    <citation type="submission" date="2004-06" db="EMBL/GenBank/DDBJ databases">
        <authorList>
            <person name="Zhang K."/>
            <person name="Mauco G."/>
            <person name="Hauet T."/>
        </authorList>
    </citation>
    <scope>NUCLEOTIDE SEQUENCE [MRNA]</scope>
</reference>
<organism>
    <name type="scientific">Sus scrofa</name>
    <name type="common">Pig</name>
    <dbReference type="NCBI Taxonomy" id="9823"/>
    <lineage>
        <taxon>Eukaryota</taxon>
        <taxon>Metazoa</taxon>
        <taxon>Chordata</taxon>
        <taxon>Craniata</taxon>
        <taxon>Vertebrata</taxon>
        <taxon>Euteleostomi</taxon>
        <taxon>Mammalia</taxon>
        <taxon>Eutheria</taxon>
        <taxon>Laurasiatheria</taxon>
        <taxon>Artiodactyla</taxon>
        <taxon>Suina</taxon>
        <taxon>Suidae</taxon>
        <taxon>Sus</taxon>
    </lineage>
</organism>